<name>YAGU_ECOLI</name>
<reference key="1">
    <citation type="submission" date="1997-01" db="EMBL/GenBank/DDBJ databases">
        <title>Sequence of minutes 4-25 of Escherichia coli.</title>
        <authorList>
            <person name="Chung E."/>
            <person name="Allen E."/>
            <person name="Araujo R."/>
            <person name="Aparicio A.M."/>
            <person name="Davis K."/>
            <person name="Duncan M."/>
            <person name="Federspiel N."/>
            <person name="Hyman R."/>
            <person name="Kalman S."/>
            <person name="Komp C."/>
            <person name="Kurdi O."/>
            <person name="Lew H."/>
            <person name="Lin D."/>
            <person name="Namath A."/>
            <person name="Oefner P."/>
            <person name="Roberts D."/>
            <person name="Schramm S."/>
            <person name="Davis R.W."/>
        </authorList>
    </citation>
    <scope>NUCLEOTIDE SEQUENCE [LARGE SCALE GENOMIC DNA]</scope>
    <source>
        <strain>K12 / MG1655 / ATCC 47076</strain>
    </source>
</reference>
<reference key="2">
    <citation type="journal article" date="1997" name="Science">
        <title>The complete genome sequence of Escherichia coli K-12.</title>
        <authorList>
            <person name="Blattner F.R."/>
            <person name="Plunkett G. III"/>
            <person name="Bloch C.A."/>
            <person name="Perna N.T."/>
            <person name="Burland V."/>
            <person name="Riley M."/>
            <person name="Collado-Vides J."/>
            <person name="Glasner J.D."/>
            <person name="Rode C.K."/>
            <person name="Mayhew G.F."/>
            <person name="Gregor J."/>
            <person name="Davis N.W."/>
            <person name="Kirkpatrick H.A."/>
            <person name="Goeden M.A."/>
            <person name="Rose D.J."/>
            <person name="Mau B."/>
            <person name="Shao Y."/>
        </authorList>
    </citation>
    <scope>NUCLEOTIDE SEQUENCE [LARGE SCALE GENOMIC DNA]</scope>
    <source>
        <strain>K12 / MG1655 / ATCC 47076</strain>
    </source>
</reference>
<reference key="3">
    <citation type="journal article" date="2006" name="Mol. Syst. Biol.">
        <title>Highly accurate genome sequences of Escherichia coli K-12 strains MG1655 and W3110.</title>
        <authorList>
            <person name="Hayashi K."/>
            <person name="Morooka N."/>
            <person name="Yamamoto Y."/>
            <person name="Fujita K."/>
            <person name="Isono K."/>
            <person name="Choi S."/>
            <person name="Ohtsubo E."/>
            <person name="Baba T."/>
            <person name="Wanner B.L."/>
            <person name="Mori H."/>
            <person name="Horiuchi T."/>
        </authorList>
    </citation>
    <scope>NUCLEOTIDE SEQUENCE [LARGE SCALE GENOMIC DNA]</scope>
    <source>
        <strain>K12 / W3110 / ATCC 27325 / DSM 5911</strain>
    </source>
</reference>
<reference key="4">
    <citation type="journal article" date="2005" name="J. Biol. Chem.">
        <title>Protein complexes of the Escherichia coli cell envelope.</title>
        <authorList>
            <person name="Stenberg F."/>
            <person name="Chovanec P."/>
            <person name="Maslen S.L."/>
            <person name="Robinson C.V."/>
            <person name="Ilag L."/>
            <person name="von Heijne G."/>
            <person name="Daley D.O."/>
        </authorList>
    </citation>
    <scope>SUBUNIT</scope>
    <scope>SUBCELLULAR LOCATION</scope>
    <source>
        <strain>BL21-DE3</strain>
    </source>
</reference>
<reference key="5">
    <citation type="journal article" date="2005" name="Science">
        <title>Global topology analysis of the Escherichia coli inner membrane proteome.</title>
        <authorList>
            <person name="Daley D.O."/>
            <person name="Rapp M."/>
            <person name="Granseth E."/>
            <person name="Melen K."/>
            <person name="Drew D."/>
            <person name="von Heijne G."/>
        </authorList>
    </citation>
    <scope>TOPOLOGY [LARGE SCALE ANALYSIS]</scope>
    <source>
        <strain>K12 / MG1655 / ATCC 47076</strain>
    </source>
</reference>
<sequence>MNIFEQTPPNRRRYGLAAFIGLIAGVVSAFVKWGAEVPLPPRSPVDMFNAACGPESLIRAAGQIDCSRNFLNPPYIFLRDWLGLTDPNAAVYTFAGHVFNWVGVTHIIFSIVFAVGYCVVAEVFPKIKLWQGLLAGALAQLFVHMISFPLMGLTPPLFDLPWYENVSEIFGHLVWFWSIEIIRRDLRNRITHEPDPEIPLGSNR</sequence>
<keyword id="KW-0997">Cell inner membrane</keyword>
<keyword id="KW-1003">Cell membrane</keyword>
<keyword id="KW-0472">Membrane</keyword>
<keyword id="KW-1185">Reference proteome</keyword>
<keyword id="KW-0812">Transmembrane</keyword>
<keyword id="KW-1133">Transmembrane helix</keyword>
<evidence type="ECO:0000255" key="1"/>
<evidence type="ECO:0000269" key="2">
    <source>
    </source>
</evidence>
<organism>
    <name type="scientific">Escherichia coli (strain K12)</name>
    <dbReference type="NCBI Taxonomy" id="83333"/>
    <lineage>
        <taxon>Bacteria</taxon>
        <taxon>Pseudomonadati</taxon>
        <taxon>Pseudomonadota</taxon>
        <taxon>Gammaproteobacteria</taxon>
        <taxon>Enterobacterales</taxon>
        <taxon>Enterobacteriaceae</taxon>
        <taxon>Escherichia</taxon>
    </lineage>
</organism>
<feature type="chain" id="PRO_0000168563" description="Inner membrane protein YagU">
    <location>
        <begin position="1"/>
        <end position="204"/>
    </location>
</feature>
<feature type="topological domain" description="Periplasmic" evidence="1">
    <location>
        <begin position="1"/>
        <end position="14"/>
    </location>
</feature>
<feature type="transmembrane region" description="Helical" evidence="1">
    <location>
        <begin position="15"/>
        <end position="35"/>
    </location>
</feature>
<feature type="topological domain" description="Cytoplasmic" evidence="1">
    <location>
        <begin position="36"/>
        <end position="100"/>
    </location>
</feature>
<feature type="transmembrane region" description="Helical" evidence="1">
    <location>
        <begin position="101"/>
        <end position="121"/>
    </location>
</feature>
<feature type="topological domain" description="Periplasmic" evidence="1">
    <location>
        <begin position="122"/>
        <end position="132"/>
    </location>
</feature>
<feature type="transmembrane region" description="Helical" evidence="1">
    <location>
        <begin position="133"/>
        <end position="153"/>
    </location>
</feature>
<feature type="topological domain" description="Cytoplasmic" evidence="1">
    <location>
        <begin position="154"/>
        <end position="204"/>
    </location>
</feature>
<comment type="subunit">
    <text evidence="2">Homodimer.</text>
</comment>
<comment type="subcellular location">
    <subcellularLocation>
        <location evidence="2">Cell inner membrane</location>
        <topology evidence="2">Multi-pass membrane protein</topology>
    </subcellularLocation>
</comment>
<proteinExistence type="evidence at protein level"/>
<accession>P0AAA1</accession>
<accession>P77262</accession>
<accession>Q2MCD5</accession>
<protein>
    <recommendedName>
        <fullName>Inner membrane protein YagU</fullName>
    </recommendedName>
</protein>
<dbReference type="EMBL" id="U73857">
    <property type="protein sequence ID" value="AAB18016.1"/>
    <property type="molecule type" value="Genomic_DNA"/>
</dbReference>
<dbReference type="EMBL" id="U00096">
    <property type="protein sequence ID" value="AAC73390.1"/>
    <property type="molecule type" value="Genomic_DNA"/>
</dbReference>
<dbReference type="EMBL" id="AP009048">
    <property type="protein sequence ID" value="BAE76071.1"/>
    <property type="molecule type" value="Genomic_DNA"/>
</dbReference>
<dbReference type="PIR" id="G64754">
    <property type="entry name" value="G64754"/>
</dbReference>
<dbReference type="RefSeq" id="NP_414821.1">
    <property type="nucleotide sequence ID" value="NC_000913.3"/>
</dbReference>
<dbReference type="RefSeq" id="WP_001019920.1">
    <property type="nucleotide sequence ID" value="NZ_STEB01000020.1"/>
</dbReference>
<dbReference type="SMR" id="P0AAA1"/>
<dbReference type="BioGRID" id="4259787">
    <property type="interactions" value="6"/>
</dbReference>
<dbReference type="FunCoup" id="P0AAA1">
    <property type="interactions" value="102"/>
</dbReference>
<dbReference type="STRING" id="511145.b0287"/>
<dbReference type="jPOST" id="P0AAA1"/>
<dbReference type="PaxDb" id="511145-b0287"/>
<dbReference type="EnsemblBacteria" id="AAC73390">
    <property type="protein sequence ID" value="AAC73390"/>
    <property type="gene ID" value="b0287"/>
</dbReference>
<dbReference type="GeneID" id="945677"/>
<dbReference type="KEGG" id="ecj:JW0281"/>
<dbReference type="KEGG" id="eco:b0287"/>
<dbReference type="KEGG" id="ecoc:C3026_01400"/>
<dbReference type="KEGG" id="ecoc:C3026_24035"/>
<dbReference type="PATRIC" id="fig|1411691.4.peg.1990"/>
<dbReference type="EchoBASE" id="EB3330"/>
<dbReference type="eggNOG" id="COG3477">
    <property type="taxonomic scope" value="Bacteria"/>
</dbReference>
<dbReference type="HOGENOM" id="CLU_095313_0_0_6"/>
<dbReference type="InParanoid" id="P0AAA1"/>
<dbReference type="OMA" id="DQKVFWF"/>
<dbReference type="OrthoDB" id="1629003at2"/>
<dbReference type="PhylomeDB" id="P0AAA1"/>
<dbReference type="BioCyc" id="EcoCyc:G6158-MONOMER"/>
<dbReference type="PRO" id="PR:P0AAA1"/>
<dbReference type="Proteomes" id="UP000000625">
    <property type="component" value="Chromosome"/>
</dbReference>
<dbReference type="GO" id="GO:0005886">
    <property type="term" value="C:plasma membrane"/>
    <property type="evidence" value="ECO:0000314"/>
    <property type="project" value="EcoCyc"/>
</dbReference>
<dbReference type="GO" id="GO:0010447">
    <property type="term" value="P:response to acidic pH"/>
    <property type="evidence" value="ECO:0000315"/>
    <property type="project" value="EcoCyc"/>
</dbReference>
<dbReference type="InterPro" id="IPR009898">
    <property type="entry name" value="DUF1440"/>
</dbReference>
<dbReference type="Pfam" id="PF07274">
    <property type="entry name" value="DUF1440"/>
    <property type="match status" value="1"/>
</dbReference>
<gene>
    <name type="primary">yagU</name>
    <name type="ordered locus">b0287</name>
    <name type="ordered locus">JW0281</name>
</gene>